<sequence>MFDFDATLPLMALQFVLLAIILNAIFYKPLNKALDERADYIRQNETGGQQQLAEAKELAAKYEQQLAQARKESQDIVAQAQAEAKQLATEAVAEAQKEAIAKKEAAAQEIEQQRQEALKTLEQQVDTLSRQILEKLLGPELVK</sequence>
<name>ATPF2_CROS5</name>
<gene>
    <name evidence="1 2" type="primary">atpF2</name>
    <name evidence="1" type="synonym">atpG</name>
    <name type="ordered locus">cce_4485</name>
</gene>
<dbReference type="EMBL" id="CP000806">
    <property type="protein sequence ID" value="ACB53833.1"/>
    <property type="molecule type" value="Genomic_DNA"/>
</dbReference>
<dbReference type="RefSeq" id="WP_009543461.1">
    <property type="nucleotide sequence ID" value="NC_010546.1"/>
</dbReference>
<dbReference type="SMR" id="B1WUH9"/>
<dbReference type="STRING" id="43989.cce_4485"/>
<dbReference type="KEGG" id="cyt:cce_4485"/>
<dbReference type="eggNOG" id="COG0711">
    <property type="taxonomic scope" value="Bacteria"/>
</dbReference>
<dbReference type="HOGENOM" id="CLU_079215_9_0_3"/>
<dbReference type="OrthoDB" id="426571at2"/>
<dbReference type="Proteomes" id="UP000001203">
    <property type="component" value="Chromosome circular"/>
</dbReference>
<dbReference type="GO" id="GO:0031676">
    <property type="term" value="C:plasma membrane-derived thylakoid membrane"/>
    <property type="evidence" value="ECO:0007669"/>
    <property type="project" value="UniProtKB-SubCell"/>
</dbReference>
<dbReference type="GO" id="GO:0045259">
    <property type="term" value="C:proton-transporting ATP synthase complex"/>
    <property type="evidence" value="ECO:0007669"/>
    <property type="project" value="UniProtKB-KW"/>
</dbReference>
<dbReference type="GO" id="GO:0046933">
    <property type="term" value="F:proton-transporting ATP synthase activity, rotational mechanism"/>
    <property type="evidence" value="ECO:0007669"/>
    <property type="project" value="UniProtKB-UniRule"/>
</dbReference>
<dbReference type="GO" id="GO:0046961">
    <property type="term" value="F:proton-transporting ATPase activity, rotational mechanism"/>
    <property type="evidence" value="ECO:0007669"/>
    <property type="project" value="TreeGrafter"/>
</dbReference>
<dbReference type="CDD" id="cd06503">
    <property type="entry name" value="ATP-synt_Fo_b"/>
    <property type="match status" value="1"/>
</dbReference>
<dbReference type="Gene3D" id="1.20.5.620">
    <property type="entry name" value="F1F0 ATP synthase subunit B, membrane domain"/>
    <property type="match status" value="1"/>
</dbReference>
<dbReference type="HAMAP" id="MF_01398">
    <property type="entry name" value="ATP_synth_b_bprime"/>
    <property type="match status" value="1"/>
</dbReference>
<dbReference type="HAMAP" id="MF_01399">
    <property type="entry name" value="ATP_synth_bprime"/>
    <property type="match status" value="1"/>
</dbReference>
<dbReference type="InterPro" id="IPR034679">
    <property type="entry name" value="ATP_synth_b"/>
</dbReference>
<dbReference type="InterPro" id="IPR028987">
    <property type="entry name" value="ATP_synth_B-like_membr_sf"/>
</dbReference>
<dbReference type="InterPro" id="IPR002146">
    <property type="entry name" value="ATP_synth_b/b'su_bac/chlpt"/>
</dbReference>
<dbReference type="InterPro" id="IPR050059">
    <property type="entry name" value="ATP_synthase_B_chain"/>
</dbReference>
<dbReference type="NCBIfam" id="NF005607">
    <property type="entry name" value="PRK07353.1"/>
    <property type="match status" value="1"/>
</dbReference>
<dbReference type="PANTHER" id="PTHR33445">
    <property type="entry name" value="ATP SYNTHASE SUBUNIT B', CHLOROPLASTIC"/>
    <property type="match status" value="1"/>
</dbReference>
<dbReference type="PANTHER" id="PTHR33445:SF2">
    <property type="entry name" value="ATP SYNTHASE SUBUNIT B', CHLOROPLASTIC"/>
    <property type="match status" value="1"/>
</dbReference>
<dbReference type="Pfam" id="PF00430">
    <property type="entry name" value="ATP-synt_B"/>
    <property type="match status" value="1"/>
</dbReference>
<dbReference type="SUPFAM" id="SSF81573">
    <property type="entry name" value="F1F0 ATP synthase subunit B, membrane domain"/>
    <property type="match status" value="1"/>
</dbReference>
<comment type="function">
    <text evidence="1">F(1)F(0) ATP synthase produces ATP from ADP in the presence of a proton or sodium gradient. F-type ATPases consist of two structural domains, F(1) containing the extramembraneous catalytic core and F(0) containing the membrane proton channel, linked together by a central stalk and a peripheral stalk. During catalysis, ATP synthesis in the catalytic domain of F(1) is coupled via a rotary mechanism of the central stalk subunits to proton translocation.</text>
</comment>
<comment type="function">
    <text evidence="1">Component of the F(0) channel, it forms part of the peripheral stalk, linking F(1) to F(0). The b'-subunit is a diverged and duplicated form of b found in plants and photosynthetic bacteria.</text>
</comment>
<comment type="subunit">
    <text evidence="1">F-type ATPases have 2 components, F(1) - the catalytic core - and F(0) - the membrane proton channel. F(1) has five subunits: alpha(3), beta(3), gamma(1), delta(1), epsilon(1). F(0) has four main subunits: a(1), b(1), b'(1) and c(10-14). The alpha and beta chains form an alternating ring which encloses part of the gamma chain. F(1) is attached to F(0) by a central stalk formed by the gamma and epsilon chains, while a peripheral stalk is formed by the delta, b and b' chains.</text>
</comment>
<comment type="subcellular location">
    <subcellularLocation>
        <location evidence="1">Cellular thylakoid membrane</location>
        <topology evidence="1">Single-pass membrane protein</topology>
    </subcellularLocation>
</comment>
<comment type="similarity">
    <text evidence="1">Belongs to the ATPase B chain family.</text>
</comment>
<accession>B1WUH9</accession>
<organism>
    <name type="scientific">Crocosphaera subtropica (strain ATCC 51142 / BH68)</name>
    <name type="common">Cyanothece sp. (strain ATCC 51142)</name>
    <dbReference type="NCBI Taxonomy" id="43989"/>
    <lineage>
        <taxon>Bacteria</taxon>
        <taxon>Bacillati</taxon>
        <taxon>Cyanobacteriota</taxon>
        <taxon>Cyanophyceae</taxon>
        <taxon>Oscillatoriophycideae</taxon>
        <taxon>Chroococcales</taxon>
        <taxon>Aphanothecaceae</taxon>
        <taxon>Crocosphaera</taxon>
        <taxon>Crocosphaera subtropica</taxon>
    </lineage>
</organism>
<reference key="1">
    <citation type="journal article" date="2008" name="Proc. Natl. Acad. Sci. U.S.A.">
        <title>The genome of Cyanothece 51142, a unicellular diazotrophic cyanobacterium important in the marine nitrogen cycle.</title>
        <authorList>
            <person name="Welsh E.A."/>
            <person name="Liberton M."/>
            <person name="Stoeckel J."/>
            <person name="Loh T."/>
            <person name="Elvitigala T."/>
            <person name="Wang C."/>
            <person name="Wollam A."/>
            <person name="Fulton R.S."/>
            <person name="Clifton S.W."/>
            <person name="Jacobs J.M."/>
            <person name="Aurora R."/>
            <person name="Ghosh B.K."/>
            <person name="Sherman L.A."/>
            <person name="Smith R.D."/>
            <person name="Wilson R.K."/>
            <person name="Pakrasi H.B."/>
        </authorList>
    </citation>
    <scope>NUCLEOTIDE SEQUENCE [LARGE SCALE GENOMIC DNA]</scope>
    <source>
        <strain>ATCC 51142 / BH68</strain>
    </source>
</reference>
<proteinExistence type="inferred from homology"/>
<feature type="chain" id="PRO_0000369005" description="ATP synthase subunit b'">
    <location>
        <begin position="1"/>
        <end position="143"/>
    </location>
</feature>
<feature type="transmembrane region" description="Helical" evidence="1">
    <location>
        <begin position="6"/>
        <end position="26"/>
    </location>
</feature>
<keyword id="KW-0066">ATP synthesis</keyword>
<keyword id="KW-0138">CF(0)</keyword>
<keyword id="KW-0375">Hydrogen ion transport</keyword>
<keyword id="KW-0406">Ion transport</keyword>
<keyword id="KW-0472">Membrane</keyword>
<keyword id="KW-1185">Reference proteome</keyword>
<keyword id="KW-0793">Thylakoid</keyword>
<keyword id="KW-0812">Transmembrane</keyword>
<keyword id="KW-1133">Transmembrane helix</keyword>
<keyword id="KW-0813">Transport</keyword>
<evidence type="ECO:0000255" key="1">
    <source>
        <dbReference type="HAMAP-Rule" id="MF_01399"/>
    </source>
</evidence>
<evidence type="ECO:0000305" key="2"/>
<protein>
    <recommendedName>
        <fullName evidence="1">ATP synthase subunit b'</fullName>
    </recommendedName>
    <alternativeName>
        <fullName evidence="1">ATP synthase F(0) sector subunit b'</fullName>
    </alternativeName>
    <alternativeName>
        <fullName evidence="1">ATPase subunit II</fullName>
    </alternativeName>
    <alternativeName>
        <fullName evidence="1">F-type ATPase subunit b'</fullName>
        <shortName evidence="1">F-ATPase subunit b'</shortName>
    </alternativeName>
</protein>